<comment type="function">
    <text>Weak inhibitor of cysteine proteinases.</text>
</comment>
<comment type="subunit">
    <text>Each inhibitor is composed of two chains, designated A and B linked by three disulfide bonds.</text>
</comment>
<comment type="similarity">
    <text evidence="3">Belongs to the protease inhibitor I67 family.</text>
</comment>
<dbReference type="EMBL" id="AF509782">
    <property type="protein sequence ID" value="AAP47112.1"/>
    <property type="molecule type" value="Genomic_DNA"/>
</dbReference>
<dbReference type="PIR" id="A01307">
    <property type="entry name" value="XBPI"/>
</dbReference>
<dbReference type="PIR" id="S66609">
    <property type="entry name" value="S66609"/>
</dbReference>
<dbReference type="PDB" id="1BI6">
    <property type="method" value="NMR"/>
    <property type="chains" value="H=188-228, L=172-182"/>
</dbReference>
<dbReference type="PDB" id="2BI6">
    <property type="method" value="NMR"/>
    <property type="chains" value="H=188-228, L=172-182"/>
</dbReference>
<dbReference type="PDBsum" id="1BI6"/>
<dbReference type="PDBsum" id="2BI6"/>
<dbReference type="SMR" id="P01068"/>
<dbReference type="MEROPS" id="I67.001"/>
<dbReference type="EvolutionaryTrace" id="P01068"/>
<dbReference type="Proteomes" id="UP000515123">
    <property type="component" value="Unplaced"/>
</dbReference>
<dbReference type="GO" id="GO:0005576">
    <property type="term" value="C:extracellular region"/>
    <property type="evidence" value="ECO:0007669"/>
    <property type="project" value="InterPro"/>
</dbReference>
<dbReference type="GO" id="GO:0004867">
    <property type="term" value="F:serine-type endopeptidase inhibitor activity"/>
    <property type="evidence" value="ECO:0007669"/>
    <property type="project" value="InterPro"/>
</dbReference>
<dbReference type="CDD" id="cd00023">
    <property type="entry name" value="BBI"/>
    <property type="match status" value="2"/>
</dbReference>
<dbReference type="Gene3D" id="2.10.69.10">
    <property type="entry name" value="Cysteine Protease (Bromelain) Inhibitor, subunit H"/>
    <property type="match status" value="3"/>
</dbReference>
<dbReference type="InterPro" id="IPR035995">
    <property type="entry name" value="Bowman-Birk_prot_inh"/>
</dbReference>
<dbReference type="InterPro" id="IPR036212">
    <property type="entry name" value="Bromein_sf"/>
</dbReference>
<dbReference type="InterPro" id="IPR000877">
    <property type="entry name" value="Prot_inh_BBI"/>
</dbReference>
<dbReference type="InterPro" id="IPR022713">
    <property type="entry name" value="Prot_inhib_I67_bromein"/>
</dbReference>
<dbReference type="Pfam" id="PF11405">
    <property type="entry name" value="Inhibitor_I67"/>
    <property type="match status" value="3"/>
</dbReference>
<dbReference type="SMART" id="SM00269">
    <property type="entry name" value="BowB"/>
    <property type="match status" value="3"/>
</dbReference>
<dbReference type="SUPFAM" id="SSF57243">
    <property type="entry name" value="Bromelain inhibitor VI (cysteine protease inhibitor)"/>
    <property type="match status" value="6"/>
</dbReference>
<proteinExistence type="evidence at protein level"/>
<sequence>MNMLLLFLHEVINGERVTLTACSECVCPLQTSSSDDEYKCYCADTYSDCPGFCKKCKAEFGKYICLDLISPNDCVKPVSSSEAKQKMIKGERVTLTACSECVCPLRTSSSDEEYKCYCTDTYSDCPGFCKKCKAEFGKYICLDLISPNDCVKPVSSLEAKQNMIKEERVTLTACSECVCPLRTSSSDEEYKCYCTDTYSDCPGFCKTCKAEFGKYICLDLISPNDCVKPVSSWEARQKIKLLQGRE</sequence>
<reference key="1">
    <citation type="journal article" date="2002" name="J. Biol. Chem.">
        <title>Characterization of genomic sequence coding for bromelain inhibitors in pineapple and expression of its recombinant isoform.</title>
        <authorList>
            <person name="Sawano Y."/>
            <person name="Muramatsu T."/>
            <person name="Hatano K."/>
            <person name="Nagata K."/>
            <person name="Tanokura M."/>
        </authorList>
    </citation>
    <scope>NUCLEOTIDE SEQUENCE [GENOMIC DNA]</scope>
</reference>
<reference key="2">
    <citation type="journal article" date="1975" name="J. Biol. Chem.">
        <title>Primary structural analysis of sulfhydryl protease inhibitors from pineapple stem.</title>
        <authorList>
            <person name="Reddy M.N."/>
            <person name="Keim P.S."/>
            <person name="Heinrikson R.L."/>
            <person name="Kezdy F.J."/>
        </authorList>
    </citation>
    <scope>PROTEIN SEQUENCE OF 20-30; 36-76; 172-182 AND 188-228</scope>
</reference>
<reference key="3">
    <citation type="journal article" date="1992" name="Biol. Chem. Hoppe-Seyler">
        <title>Characterization and structure of pineapple stem inhibitor of cysteine proteinases.</title>
        <authorList>
            <person name="Lenarcic B."/>
            <person name="Ritonja A."/>
            <person name="Turk B."/>
            <person name="Dolenc I."/>
            <person name="Turk V."/>
        </authorList>
    </citation>
    <scope>PROTEIN SEQUENCE OF 172-182 AND 188-228</scope>
</reference>
<reference key="4">
    <citation type="journal article" date="1995" name="Eur. J. Biochem.">
        <title>Primary structure, sequence-specific 1H-NMR assignments and secondary structure in solution of bromelain inhibitor VI from pineapple stem.</title>
        <authorList>
            <person name="Hatano K."/>
            <person name="Kojima M."/>
            <person name="Tanokura M."/>
            <person name="Takahashi K."/>
        </authorList>
    </citation>
    <scope>PROTEIN SEQUENCE OF 172-182 AND 188-228</scope>
    <scope>STRUCTURE BY NMR</scope>
</reference>
<reference key="5">
    <citation type="journal article" date="2005" name="Biol. Chem.">
        <title>Susceptibility of the interchain peptide of a bromelain inhibitor precursor to the target proteases bromelain, chymotrypsin, and trypsin.</title>
        <authorList>
            <person name="Sawano Y."/>
            <person name="Hatano K."/>
            <person name="Tanokura M."/>
        </authorList>
    </citation>
    <scope>PROTEOLYTIC PROCESSING</scope>
</reference>
<reference key="6">
    <citation type="journal article" date="1996" name="Biochemistry">
        <title>Solution structure of bromelain inhibitor IV from pineapple stem: structural similarity with Bowman-Birk trypsin/chymotrypsin inhibitor from soybean.</title>
        <authorList>
            <person name="Hatano K."/>
            <person name="Kojima M."/>
            <person name="Tanokura M."/>
            <person name="Takahashi K."/>
        </authorList>
    </citation>
    <scope>STRUCTURE BY NMR OF 172-182 AND 188-228</scope>
</reference>
<evidence type="ECO:0000250" key="1"/>
<evidence type="ECO:0000269" key="2">
    <source>
    </source>
</evidence>
<evidence type="ECO:0000305" key="3"/>
<evidence type="ECO:0007829" key="4">
    <source>
        <dbReference type="PDB" id="1BI6"/>
    </source>
</evidence>
<organism>
    <name type="scientific">Ananas comosus</name>
    <name type="common">Pineapple</name>
    <name type="synonym">Ananas ananas</name>
    <dbReference type="NCBI Taxonomy" id="4615"/>
    <lineage>
        <taxon>Eukaryota</taxon>
        <taxon>Viridiplantae</taxon>
        <taxon>Streptophyta</taxon>
        <taxon>Embryophyta</taxon>
        <taxon>Tracheophyta</taxon>
        <taxon>Spermatophyta</taxon>
        <taxon>Magnoliopsida</taxon>
        <taxon>Liliopsida</taxon>
        <taxon>Poales</taxon>
        <taxon>Bromeliaceae</taxon>
        <taxon>Bromelioideae</taxon>
        <taxon>Ananas</taxon>
    </lineage>
</organism>
<protein>
    <recommendedName>
        <fullName>Bromelain inhibitor</fullName>
        <shortName>BI</shortName>
        <shortName>Bromein</shortName>
    </recommendedName>
    <component>
        <recommendedName>
            <fullName>Bromelain inhibitor 1 chain B</fullName>
            <shortName>BI-I B</shortName>
        </recommendedName>
        <alternativeName>
            <fullName>Bromelain inhibitor VII light chain</fullName>
            <shortName>BI-VII L</shortName>
        </alternativeName>
    </component>
    <component>
        <recommendedName>
            <fullName>Bromelain inhibitor 1 chain A</fullName>
            <shortName>BI-I A</shortName>
        </recommendedName>
        <alternativeName>
            <fullName>Bromelain inhibitor VII heavy chain</fullName>
            <shortName>BI-VII H</shortName>
        </alternativeName>
    </component>
    <component>
        <recommendedName>
            <fullName>Bromelain inhibitor 3 chain B</fullName>
            <shortName>BI-III B</shortName>
        </recommendedName>
    </component>
    <component>
        <recommendedName>
            <fullName>Bromelain inhibitor 3 chain A</fullName>
            <shortName>BI-III A</shortName>
        </recommendedName>
    </component>
    <component>
        <recommendedName>
            <fullName>Bromelain inhibitor 2 chain B</fullName>
            <shortName>BI-II B</shortName>
        </recommendedName>
        <alternativeName>
            <fullName>Bromelain inhibitor VI light chain</fullName>
            <shortName>BI-VI L</shortName>
        </alternativeName>
    </component>
    <component>
        <recommendedName>
            <fullName>Bromelain inhibitor 2 chain A</fullName>
            <shortName>BI-II A</shortName>
        </recommendedName>
        <alternativeName>
            <fullName>Bromelain inhibitor VI heavy chain</fullName>
            <shortName>BI-VI H</shortName>
        </alternativeName>
    </component>
</protein>
<accession>P01068</accession>
<accession>P27478</accession>
<accession>Q7Y0Z3</accession>
<name>IBRO_ANACO</name>
<feature type="signal peptide" evidence="2">
    <location>
        <begin position="1"/>
        <end position="19"/>
    </location>
</feature>
<feature type="peptide" id="PRO_0000021480" description="Bromelain inhibitor 1 chain B">
    <location>
        <begin position="20"/>
        <end position="30"/>
    </location>
</feature>
<feature type="propeptide" id="PRO_0000246127" evidence="2">
    <location>
        <begin position="31"/>
        <end position="35"/>
    </location>
</feature>
<feature type="peptide" id="PRO_0000021481" description="Bromelain inhibitor 1 chain A">
    <location>
        <begin position="36"/>
        <end position="76"/>
    </location>
</feature>
<feature type="propeptide" id="PRO_0000246128">
    <location>
        <begin position="77"/>
        <end position="95"/>
    </location>
</feature>
<feature type="peptide" id="PRO_0000246129" description="Bromelain inhibitor 3 chain B">
    <location>
        <begin position="96"/>
        <end position="106"/>
    </location>
</feature>
<feature type="propeptide" id="PRO_0000246130">
    <location>
        <begin position="107"/>
        <end position="111"/>
    </location>
</feature>
<feature type="peptide" id="PRO_0000246131" description="Bromelain inhibitor 3 chain A">
    <location>
        <begin position="112"/>
        <end position="152"/>
    </location>
</feature>
<feature type="propeptide" id="PRO_0000246132">
    <location>
        <begin position="153"/>
        <end position="171"/>
    </location>
</feature>
<feature type="peptide" id="PRO_0000021482" description="Bromelain inhibitor 2 chain B">
    <location>
        <begin position="172"/>
        <end position="182"/>
    </location>
</feature>
<feature type="propeptide" id="PRO_0000246133">
    <location>
        <begin position="183"/>
        <end position="187"/>
    </location>
</feature>
<feature type="peptide" id="PRO_0000021483" description="Bromelain inhibitor 2 chain A">
    <location>
        <begin position="188"/>
        <end position="228"/>
    </location>
</feature>
<feature type="propeptide" id="PRO_0000246134">
    <location>
        <begin position="229"/>
        <end position="246"/>
    </location>
</feature>
<feature type="disulfide bond" evidence="1">
    <location>
        <begin position="22"/>
        <end position="42"/>
    </location>
</feature>
<feature type="disulfide bond" evidence="1">
    <location>
        <begin position="25"/>
        <end position="74"/>
    </location>
</feature>
<feature type="disulfide bond" evidence="1">
    <location>
        <begin position="27"/>
        <end position="40"/>
    </location>
</feature>
<feature type="disulfide bond" evidence="1">
    <location>
        <begin position="49"/>
        <end position="56"/>
    </location>
</feature>
<feature type="disulfide bond" evidence="1">
    <location>
        <begin position="53"/>
        <end position="65"/>
    </location>
</feature>
<feature type="disulfide bond" evidence="1">
    <location>
        <begin position="98"/>
        <end position="118"/>
    </location>
</feature>
<feature type="disulfide bond" evidence="1">
    <location>
        <begin position="101"/>
        <end position="150"/>
    </location>
</feature>
<feature type="disulfide bond" evidence="1">
    <location>
        <begin position="103"/>
        <end position="116"/>
    </location>
</feature>
<feature type="disulfide bond" evidence="1">
    <location>
        <begin position="125"/>
        <end position="132"/>
    </location>
</feature>
<feature type="disulfide bond" evidence="1">
    <location>
        <begin position="129"/>
        <end position="141"/>
    </location>
</feature>
<feature type="disulfide bond">
    <location>
        <begin position="174"/>
        <end position="194"/>
    </location>
</feature>
<feature type="disulfide bond">
    <location>
        <begin position="177"/>
        <end position="226"/>
    </location>
</feature>
<feature type="disulfide bond">
    <location>
        <begin position="179"/>
        <end position="192"/>
    </location>
</feature>
<feature type="disulfide bond">
    <location>
        <begin position="201"/>
        <end position="208"/>
    </location>
</feature>
<feature type="disulfide bond">
    <location>
        <begin position="205"/>
        <end position="217"/>
    </location>
</feature>
<feature type="sequence variant">
    <original>E</original>
    <variation>Q</variation>
    <location>
        <position position="188"/>
    </location>
</feature>
<feature type="strand" evidence="4">
    <location>
        <begin position="175"/>
        <end position="178"/>
    </location>
</feature>
<feature type="strand" evidence="4">
    <location>
        <begin position="206"/>
        <end position="211"/>
    </location>
</feature>
<feature type="strand" evidence="4">
    <location>
        <begin position="214"/>
        <end position="217"/>
    </location>
</feature>
<feature type="strand" evidence="4">
    <location>
        <begin position="223"/>
        <end position="225"/>
    </location>
</feature>
<keyword id="KW-0002">3D-structure</keyword>
<keyword id="KW-0903">Direct protein sequencing</keyword>
<keyword id="KW-1015">Disulfide bond</keyword>
<keyword id="KW-0646">Protease inhibitor</keyword>
<keyword id="KW-0677">Repeat</keyword>
<keyword id="KW-0732">Signal</keyword>